<keyword id="KW-0963">Cytoplasm</keyword>
<keyword id="KW-0456">Lyase</keyword>
<keyword id="KW-0460">Magnesium</keyword>
<keyword id="KW-0464">Manganese</keyword>
<keyword id="KW-0479">Metal-binding</keyword>
<keyword id="KW-1185">Reference proteome</keyword>
<accession>Q9LH31</accession>
<name>TPS30_ARATH</name>
<gene>
    <name evidence="3" type="primary">TPS30</name>
    <name evidence="5" type="ordered locus">At3g32030</name>
    <name evidence="6" type="ORF">T8O3.12</name>
</gene>
<reference key="1">
    <citation type="submission" date="2000-05" db="EMBL/GenBank/DDBJ databases">
        <title>Structural analysis of Arabidopsis thaliana chromosome 3. III.</title>
        <authorList>
            <person name="Nakamura Y."/>
        </authorList>
    </citation>
    <scope>NUCLEOTIDE SEQUENCE [LARGE SCALE GENOMIC DNA]</scope>
    <source>
        <strain>cv. Columbia</strain>
    </source>
</reference>
<reference key="2">
    <citation type="journal article" date="2017" name="Plant J.">
        <title>Araport11: a complete reannotation of the Arabidopsis thaliana reference genome.</title>
        <authorList>
            <person name="Cheng C.Y."/>
            <person name="Krishnakumar V."/>
            <person name="Chan A.P."/>
            <person name="Thibaud-Nissen F."/>
            <person name="Schobel S."/>
            <person name="Town C.D."/>
        </authorList>
    </citation>
    <scope>GENOME REANNOTATION</scope>
    <source>
        <strain>cv. Columbia</strain>
    </source>
</reference>
<reference key="3">
    <citation type="journal article" date="2002" name="Mol. Genet. Genomics">
        <title>Genomic analysis of the terpenoid synthase (AtTPS) gene family of Arabidopsis thaliana.</title>
        <authorList>
            <person name="Aubourg S."/>
            <person name="Lecharny A."/>
            <person name="Bohlmann J."/>
        </authorList>
    </citation>
    <scope>GENE FAMILY</scope>
    <scope>NOMENCLATURE</scope>
</reference>
<reference key="4">
    <citation type="journal article" date="2003" name="Plant Mol. Biol.">
        <title>Genome organization in Arabidopsis thaliana: a survey for genes involved in isoprenoid and chlorophyll metabolism.</title>
        <authorList>
            <person name="Lange B.M."/>
            <person name="Ghassemian M."/>
        </authorList>
    </citation>
    <scope>GENE FAMILY</scope>
</reference>
<reference key="5">
    <citation type="journal article" date="2016" name="Front. Plant Sci.">
        <title>Identification of a dolabellane type diterpene synthase and other root-expressed diterpene synthases in Arabidopsis.</title>
        <authorList>
            <person name="Wang Q."/>
            <person name="Jia M."/>
            <person name="Huh J.H."/>
            <person name="Muchlinski A."/>
            <person name="Peters R.J."/>
            <person name="Tholl D."/>
        </authorList>
    </citation>
    <scope>FUNCTION</scope>
    <source>
        <strain>cv. Columbia</strain>
    </source>
</reference>
<feature type="chain" id="PRO_0000403717" description="Terpenoid synthase 30">
    <location>
        <begin position="1"/>
        <end position="604"/>
    </location>
</feature>
<feature type="short sequence motif" description="DDXXD motif; degenerate" evidence="4">
    <location>
        <begin position="356"/>
        <end position="360"/>
    </location>
</feature>
<feature type="binding site" evidence="1">
    <location>
        <position position="356"/>
    </location>
    <ligand>
        <name>Mg(2+)</name>
        <dbReference type="ChEBI" id="CHEBI:18420"/>
        <label>1</label>
    </ligand>
</feature>
<feature type="binding site" evidence="1">
    <location>
        <position position="356"/>
    </location>
    <ligand>
        <name>Mg(2+)</name>
        <dbReference type="ChEBI" id="CHEBI:18420"/>
        <label>2</label>
    </ligand>
</feature>
<feature type="binding site" evidence="1">
    <location>
        <position position="360"/>
    </location>
    <ligand>
        <name>Mg(2+)</name>
        <dbReference type="ChEBI" id="CHEBI:18420"/>
        <label>1</label>
    </ligand>
</feature>
<feature type="binding site" evidence="1">
    <location>
        <position position="360"/>
    </location>
    <ligand>
        <name>Mg(2+)</name>
        <dbReference type="ChEBI" id="CHEBI:18420"/>
        <label>2</label>
    </ligand>
</feature>
<feature type="binding site" evidence="1">
    <location>
        <position position="500"/>
    </location>
    <ligand>
        <name>Mg(2+)</name>
        <dbReference type="ChEBI" id="CHEBI:18420"/>
        <label>3</label>
    </ligand>
</feature>
<feature type="binding site" evidence="1">
    <location>
        <position position="504"/>
    </location>
    <ligand>
        <name>Mg(2+)</name>
        <dbReference type="ChEBI" id="CHEBI:18420"/>
        <label>3</label>
    </ligand>
</feature>
<feature type="binding site" evidence="1">
    <location>
        <position position="508"/>
    </location>
    <ligand>
        <name>Mg(2+)</name>
        <dbReference type="ChEBI" id="CHEBI:18420"/>
        <label>3</label>
    </ligand>
</feature>
<dbReference type="EC" id="4.2.3.-"/>
<dbReference type="EMBL" id="AP002068">
    <property type="protein sequence ID" value="BAB01981.1"/>
    <property type="molecule type" value="Genomic_DNA"/>
</dbReference>
<dbReference type="EMBL" id="CP002686">
    <property type="protein sequence ID" value="AEE77679.1"/>
    <property type="molecule type" value="Genomic_DNA"/>
</dbReference>
<dbReference type="RefSeq" id="NP_189746.1">
    <property type="nucleotide sequence ID" value="NM_114026.2"/>
</dbReference>
<dbReference type="SMR" id="Q9LH31"/>
<dbReference type="FunCoup" id="Q9LH31">
    <property type="interactions" value="80"/>
</dbReference>
<dbReference type="STRING" id="3702.Q9LH31"/>
<dbReference type="PaxDb" id="3702-AT3G32030.1"/>
<dbReference type="ProteomicsDB" id="232500"/>
<dbReference type="EnsemblPlants" id="AT3G32030.1">
    <property type="protein sequence ID" value="AT3G32030.1"/>
    <property type="gene ID" value="AT3G32030"/>
</dbReference>
<dbReference type="GeneID" id="822955"/>
<dbReference type="Gramene" id="AT3G32030.1">
    <property type="protein sequence ID" value="AT3G32030.1"/>
    <property type="gene ID" value="AT3G32030"/>
</dbReference>
<dbReference type="KEGG" id="ath:AT3G32030"/>
<dbReference type="Araport" id="AT3G32030"/>
<dbReference type="TAIR" id="AT3G32030">
    <property type="gene designation" value="TPS9"/>
</dbReference>
<dbReference type="eggNOG" id="ENOG502QUCN">
    <property type="taxonomic scope" value="Eukaryota"/>
</dbReference>
<dbReference type="HOGENOM" id="CLU_003125_7_2_1"/>
<dbReference type="InParanoid" id="Q9LH31"/>
<dbReference type="OMA" id="FDVICKE"/>
<dbReference type="PhylomeDB" id="Q9LH31"/>
<dbReference type="BioCyc" id="ARA:AT3G32030-MONOMER"/>
<dbReference type="UniPathway" id="UPA00213"/>
<dbReference type="PRO" id="PR:Q9LH31"/>
<dbReference type="Proteomes" id="UP000006548">
    <property type="component" value="Chromosome 3"/>
</dbReference>
<dbReference type="ExpressionAtlas" id="Q9LH31">
    <property type="expression patterns" value="baseline and differential"/>
</dbReference>
<dbReference type="GO" id="GO:0005737">
    <property type="term" value="C:cytoplasm"/>
    <property type="evidence" value="ECO:0007669"/>
    <property type="project" value="UniProtKB-SubCell"/>
</dbReference>
<dbReference type="GO" id="GO:0000287">
    <property type="term" value="F:magnesium ion binding"/>
    <property type="evidence" value="ECO:0007669"/>
    <property type="project" value="InterPro"/>
</dbReference>
<dbReference type="GO" id="GO:0010333">
    <property type="term" value="F:terpene synthase activity"/>
    <property type="evidence" value="ECO:0000314"/>
    <property type="project" value="TAIR"/>
</dbReference>
<dbReference type="GO" id="GO:0016102">
    <property type="term" value="P:diterpenoid biosynthetic process"/>
    <property type="evidence" value="ECO:0007669"/>
    <property type="project" value="InterPro"/>
</dbReference>
<dbReference type="GO" id="GO:0016114">
    <property type="term" value="P:terpenoid biosynthetic process"/>
    <property type="evidence" value="ECO:0000314"/>
    <property type="project" value="UniProtKB"/>
</dbReference>
<dbReference type="CDD" id="cd00684">
    <property type="entry name" value="Terpene_cyclase_plant_C1"/>
    <property type="match status" value="1"/>
</dbReference>
<dbReference type="FunFam" id="1.10.600.10:FF:000007">
    <property type="entry name" value="Isoprene synthase, chloroplastic"/>
    <property type="match status" value="1"/>
</dbReference>
<dbReference type="FunFam" id="1.50.10.130:FF:000001">
    <property type="entry name" value="Isoprene synthase, chloroplastic"/>
    <property type="match status" value="1"/>
</dbReference>
<dbReference type="Gene3D" id="1.10.600.10">
    <property type="entry name" value="Farnesyl Diphosphate Synthase"/>
    <property type="match status" value="1"/>
</dbReference>
<dbReference type="Gene3D" id="1.50.10.130">
    <property type="entry name" value="Terpene synthase, N-terminal domain"/>
    <property type="match status" value="1"/>
</dbReference>
<dbReference type="InterPro" id="IPR008949">
    <property type="entry name" value="Isoprenoid_synthase_dom_sf"/>
</dbReference>
<dbReference type="InterPro" id="IPR034741">
    <property type="entry name" value="Terpene_cyclase-like_1_C"/>
</dbReference>
<dbReference type="InterPro" id="IPR044814">
    <property type="entry name" value="Terpene_cyclase_plant_C1"/>
</dbReference>
<dbReference type="InterPro" id="IPR001906">
    <property type="entry name" value="Terpene_synth_N"/>
</dbReference>
<dbReference type="InterPro" id="IPR036965">
    <property type="entry name" value="Terpene_synth_N_sf"/>
</dbReference>
<dbReference type="InterPro" id="IPR050148">
    <property type="entry name" value="Terpene_synthase-like"/>
</dbReference>
<dbReference type="InterPro" id="IPR005630">
    <property type="entry name" value="Terpene_synthase_metal-bd"/>
</dbReference>
<dbReference type="InterPro" id="IPR008930">
    <property type="entry name" value="Terpenoid_cyclase/PrenylTrfase"/>
</dbReference>
<dbReference type="PANTHER" id="PTHR31225:SF93">
    <property type="entry name" value="ALPHA-HUMULENE_(-)-(E)-BETA-CARYOPHYLLENE SYNTHASE"/>
    <property type="match status" value="1"/>
</dbReference>
<dbReference type="PANTHER" id="PTHR31225">
    <property type="entry name" value="OS04G0344100 PROTEIN-RELATED"/>
    <property type="match status" value="1"/>
</dbReference>
<dbReference type="Pfam" id="PF01397">
    <property type="entry name" value="Terpene_synth"/>
    <property type="match status" value="1"/>
</dbReference>
<dbReference type="Pfam" id="PF03936">
    <property type="entry name" value="Terpene_synth_C"/>
    <property type="match status" value="1"/>
</dbReference>
<dbReference type="SFLD" id="SFLDS00005">
    <property type="entry name" value="Isoprenoid_Synthase_Type_I"/>
    <property type="match status" value="1"/>
</dbReference>
<dbReference type="SFLD" id="SFLDG01019">
    <property type="entry name" value="Terpene_Cyclase_Like_1_C_Termi"/>
    <property type="match status" value="1"/>
</dbReference>
<dbReference type="SUPFAM" id="SSF48239">
    <property type="entry name" value="Terpenoid cyclases/Protein prenyltransferases"/>
    <property type="match status" value="1"/>
</dbReference>
<dbReference type="SUPFAM" id="SSF48576">
    <property type="entry name" value="Terpenoid synthases"/>
    <property type="match status" value="1"/>
</dbReference>
<protein>
    <recommendedName>
        <fullName evidence="3">Terpenoid synthase 30</fullName>
        <shortName evidence="3">AtTPS30</shortName>
        <ecNumber>4.2.3.-</ecNumber>
    </recommendedName>
</protein>
<proteinExistence type="evidence at transcript level"/>
<comment type="function">
    <text evidence="2">Involved in terpene biosynthesis in roots. Possesses sesquiterpene (C15) synthase activity and diterpene (C20) synthase activity in vitro.</text>
</comment>
<comment type="cofactor">
    <cofactor evidence="1">
        <name>Mg(2+)</name>
        <dbReference type="ChEBI" id="CHEBI:18420"/>
    </cofactor>
    <cofactor evidence="1">
        <name>Mn(2+)</name>
        <dbReference type="ChEBI" id="CHEBI:29035"/>
    </cofactor>
    <text evidence="1">Binds 3 Mg(2+) or Mn(2+) ions per subunit.</text>
</comment>
<comment type="pathway">
    <text evidence="4">Secondary metabolite biosynthesis; terpenoid biosynthesis.</text>
</comment>
<comment type="subcellular location">
    <subcellularLocation>
        <location evidence="4">Cytoplasm</location>
    </subcellularLocation>
</comment>
<comment type="domain">
    <text evidence="4">The Asp-Asp-Xaa-Xaa-Asp/Glu (DDXXD/E) motif is important for the catalytic activity, presumably through binding to Mg(2+).</text>
</comment>
<comment type="similarity">
    <text evidence="4">Belongs to the terpene synthase family. Tpsa subfamily.</text>
</comment>
<evidence type="ECO:0000250" key="1">
    <source>
        <dbReference type="UniProtKB" id="Q40577"/>
    </source>
</evidence>
<evidence type="ECO:0000269" key="2">
    <source>
    </source>
</evidence>
<evidence type="ECO:0000303" key="3">
    <source>
    </source>
</evidence>
<evidence type="ECO:0000305" key="4"/>
<evidence type="ECO:0000312" key="5">
    <source>
        <dbReference type="Araport" id="AT3G32030"/>
    </source>
</evidence>
<evidence type="ECO:0000312" key="6">
    <source>
        <dbReference type="EMBL" id="BAB01981.1"/>
    </source>
</evidence>
<sequence length="604" mass="69812">MAVARTVFGLGTLSYLHQAPLFLKTSQSLFPRPSLSLKPMKHDFVCVKATTKSSTSDDLESGRPSILFSPSIWGDYFLSVSVDDSEFDDIAREIESVMKPYVRDRLISSHNSNKDKIRLIHLLISLGISYYFESEIEMILNKAFEELDMIIAEEDDLETISIMFEVFRLYQHKMSCDSFVRFKGEDGRLKESLVGDVRGMLQLYQAAHLGTPSDQYIMEEAKSFTRNHLESLVESTTIPPHFSSHIRDALYIDRYHNMEILVARKYISFYEQEEGHDLTLLKFGKLSFNYCRLHYIQELKTLTKWWKDQDIPSNLPCVRDRIVETYFPTLGLYFEPRFSLGRIIIAKMTIIVVALNDVCDSYATYPEAKSLIDSLQRWDIEAIDELPNYSRIVLRLILETIGEIEREMKPRGRSASVQHTIDETKSLGRAYLALSKWASEGYMPTFDEYMEVGEVTGGMDDFALYSFIAMEDCDEKPLYEWFDSKPKILQALSVLYRINNDIVTYEREMSKGEVVNGVNSYMNQHGVTKEEAVEELRKMARDNYKIVMEELLTITDVPRPVLVRCLNLARLFDVFCKHGNDEFTYPHGNLKDLITSIFIHPIPV</sequence>
<organism>
    <name type="scientific">Arabidopsis thaliana</name>
    <name type="common">Mouse-ear cress</name>
    <dbReference type="NCBI Taxonomy" id="3702"/>
    <lineage>
        <taxon>Eukaryota</taxon>
        <taxon>Viridiplantae</taxon>
        <taxon>Streptophyta</taxon>
        <taxon>Embryophyta</taxon>
        <taxon>Tracheophyta</taxon>
        <taxon>Spermatophyta</taxon>
        <taxon>Magnoliopsida</taxon>
        <taxon>eudicotyledons</taxon>
        <taxon>Gunneridae</taxon>
        <taxon>Pentapetalae</taxon>
        <taxon>rosids</taxon>
        <taxon>malvids</taxon>
        <taxon>Brassicales</taxon>
        <taxon>Brassicaceae</taxon>
        <taxon>Camelineae</taxon>
        <taxon>Arabidopsis</taxon>
    </lineage>
</organism>